<organism>
    <name type="scientific">Vesicomyosocius okutanii subsp. Calyptogena okutanii (strain HA)</name>
    <dbReference type="NCBI Taxonomy" id="412965"/>
    <lineage>
        <taxon>Bacteria</taxon>
        <taxon>Pseudomonadati</taxon>
        <taxon>Pseudomonadota</taxon>
        <taxon>Gammaproteobacteria</taxon>
        <taxon>Candidatus Pseudothioglobaceae</taxon>
        <taxon>Candidatus Vesicomyosocius</taxon>
    </lineage>
</organism>
<dbReference type="EC" id="2.7.4.9" evidence="1"/>
<dbReference type="EMBL" id="AP009247">
    <property type="protein sequence ID" value="BAF61344.1"/>
    <property type="molecule type" value="Genomic_DNA"/>
</dbReference>
<dbReference type="RefSeq" id="WP_011929614.1">
    <property type="nucleotide sequence ID" value="NC_009465.1"/>
</dbReference>
<dbReference type="SMR" id="A5CXH6"/>
<dbReference type="STRING" id="412965.COSY_0214"/>
<dbReference type="KEGG" id="vok:COSY_0214"/>
<dbReference type="eggNOG" id="COG0125">
    <property type="taxonomic scope" value="Bacteria"/>
</dbReference>
<dbReference type="HOGENOM" id="CLU_049131_0_2_6"/>
<dbReference type="OrthoDB" id="9774907at2"/>
<dbReference type="Proteomes" id="UP000000247">
    <property type="component" value="Chromosome"/>
</dbReference>
<dbReference type="GO" id="GO:0005829">
    <property type="term" value="C:cytosol"/>
    <property type="evidence" value="ECO:0007669"/>
    <property type="project" value="TreeGrafter"/>
</dbReference>
<dbReference type="GO" id="GO:0005524">
    <property type="term" value="F:ATP binding"/>
    <property type="evidence" value="ECO:0007669"/>
    <property type="project" value="UniProtKB-UniRule"/>
</dbReference>
<dbReference type="GO" id="GO:0004798">
    <property type="term" value="F:dTMP kinase activity"/>
    <property type="evidence" value="ECO:0007669"/>
    <property type="project" value="UniProtKB-UniRule"/>
</dbReference>
<dbReference type="GO" id="GO:0006233">
    <property type="term" value="P:dTDP biosynthetic process"/>
    <property type="evidence" value="ECO:0007669"/>
    <property type="project" value="InterPro"/>
</dbReference>
<dbReference type="GO" id="GO:0006235">
    <property type="term" value="P:dTTP biosynthetic process"/>
    <property type="evidence" value="ECO:0007669"/>
    <property type="project" value="UniProtKB-UniRule"/>
</dbReference>
<dbReference type="GO" id="GO:0006227">
    <property type="term" value="P:dUDP biosynthetic process"/>
    <property type="evidence" value="ECO:0007669"/>
    <property type="project" value="TreeGrafter"/>
</dbReference>
<dbReference type="CDD" id="cd01672">
    <property type="entry name" value="TMPK"/>
    <property type="match status" value="1"/>
</dbReference>
<dbReference type="FunFam" id="3.40.50.300:FF:000225">
    <property type="entry name" value="Thymidylate kinase"/>
    <property type="match status" value="1"/>
</dbReference>
<dbReference type="Gene3D" id="3.40.50.300">
    <property type="entry name" value="P-loop containing nucleotide triphosphate hydrolases"/>
    <property type="match status" value="1"/>
</dbReference>
<dbReference type="HAMAP" id="MF_00165">
    <property type="entry name" value="Thymidylate_kinase"/>
    <property type="match status" value="1"/>
</dbReference>
<dbReference type="InterPro" id="IPR027417">
    <property type="entry name" value="P-loop_NTPase"/>
</dbReference>
<dbReference type="InterPro" id="IPR039430">
    <property type="entry name" value="Thymidylate_kin-like_dom"/>
</dbReference>
<dbReference type="InterPro" id="IPR018094">
    <property type="entry name" value="Thymidylate_kinase"/>
</dbReference>
<dbReference type="NCBIfam" id="TIGR00041">
    <property type="entry name" value="DTMP_kinase"/>
    <property type="match status" value="1"/>
</dbReference>
<dbReference type="PANTHER" id="PTHR10344">
    <property type="entry name" value="THYMIDYLATE KINASE"/>
    <property type="match status" value="1"/>
</dbReference>
<dbReference type="PANTHER" id="PTHR10344:SF4">
    <property type="entry name" value="UMP-CMP KINASE 2, MITOCHONDRIAL"/>
    <property type="match status" value="1"/>
</dbReference>
<dbReference type="Pfam" id="PF02223">
    <property type="entry name" value="Thymidylate_kin"/>
    <property type="match status" value="1"/>
</dbReference>
<dbReference type="SUPFAM" id="SSF52540">
    <property type="entry name" value="P-loop containing nucleoside triphosphate hydrolases"/>
    <property type="match status" value="1"/>
</dbReference>
<feature type="chain" id="PRO_1000023310" description="Thymidylate kinase">
    <location>
        <begin position="1"/>
        <end position="205"/>
    </location>
</feature>
<feature type="binding site" evidence="1">
    <location>
        <begin position="11"/>
        <end position="18"/>
    </location>
    <ligand>
        <name>ATP</name>
        <dbReference type="ChEBI" id="CHEBI:30616"/>
    </ligand>
</feature>
<reference key="1">
    <citation type="journal article" date="2007" name="Curr. Biol.">
        <title>Reduced genome of the thioautotrophic intracellular symbiont in a deep-sea clam, Calyptogena okutanii.</title>
        <authorList>
            <person name="Kuwahara H."/>
            <person name="Yoshida T."/>
            <person name="Takaki Y."/>
            <person name="Shimamura S."/>
            <person name="Nishi S."/>
            <person name="Harada M."/>
            <person name="Matsuyama K."/>
            <person name="Takishita K."/>
            <person name="Kawato M."/>
            <person name="Uematsu K."/>
            <person name="Fujiwara Y."/>
            <person name="Sato T."/>
            <person name="Kato C."/>
            <person name="Kitagawa M."/>
            <person name="Kato I."/>
            <person name="Maruyama T."/>
        </authorList>
    </citation>
    <scope>NUCLEOTIDE SEQUENCE [LARGE SCALE GENOMIC DNA]</scope>
    <source>
        <strain>HA</strain>
    </source>
</reference>
<name>KTHY_VESOH</name>
<keyword id="KW-0067">ATP-binding</keyword>
<keyword id="KW-0418">Kinase</keyword>
<keyword id="KW-0545">Nucleotide biosynthesis</keyword>
<keyword id="KW-0547">Nucleotide-binding</keyword>
<keyword id="KW-1185">Reference proteome</keyword>
<keyword id="KW-0808">Transferase</keyword>
<protein>
    <recommendedName>
        <fullName evidence="1">Thymidylate kinase</fullName>
        <ecNumber evidence="1">2.7.4.9</ecNumber>
    </recommendedName>
    <alternativeName>
        <fullName evidence="1">dTMP kinase</fullName>
    </alternativeName>
</protein>
<comment type="function">
    <text evidence="1">Phosphorylation of dTMP to form dTDP in both de novo and salvage pathways of dTTP synthesis.</text>
</comment>
<comment type="catalytic activity">
    <reaction evidence="1">
        <text>dTMP + ATP = dTDP + ADP</text>
        <dbReference type="Rhea" id="RHEA:13517"/>
        <dbReference type="ChEBI" id="CHEBI:30616"/>
        <dbReference type="ChEBI" id="CHEBI:58369"/>
        <dbReference type="ChEBI" id="CHEBI:63528"/>
        <dbReference type="ChEBI" id="CHEBI:456216"/>
        <dbReference type="EC" id="2.7.4.9"/>
    </reaction>
</comment>
<comment type="similarity">
    <text evidence="1">Belongs to the thymidylate kinase family.</text>
</comment>
<proteinExistence type="inferred from homology"/>
<gene>
    <name evidence="1" type="primary">tmk</name>
    <name type="ordered locus">COSY_0214</name>
</gene>
<evidence type="ECO:0000255" key="1">
    <source>
        <dbReference type="HAMAP-Rule" id="MF_00165"/>
    </source>
</evidence>
<accession>A5CXH6</accession>
<sequence length="205" mass="23267">MQRGKFITIDGVEGAGKSTQIDFICSYLAKKNINVVLTREPGGTKLGEKIRALLLSIDTQLMDNDTELLLIFAARNEHIKTKIIPALNRGDWVLSDRFTDASYAYQGGGRGLSIERIALLEQWVLQDFSPDVTLLLDVPVALGMLRIKSRSRKDRIELETNDFFNRVRDSYIKRSKQFPERIKLIDASQTLKETTQQIKVILQAL</sequence>